<evidence type="ECO:0000255" key="1">
    <source>
        <dbReference type="HAMAP-Rule" id="MF_00532"/>
    </source>
</evidence>
<evidence type="ECO:0000305" key="2"/>
<organism>
    <name type="scientific">Pseudomonas entomophila (strain L48)</name>
    <dbReference type="NCBI Taxonomy" id="384676"/>
    <lineage>
        <taxon>Bacteria</taxon>
        <taxon>Pseudomonadati</taxon>
        <taxon>Pseudomonadota</taxon>
        <taxon>Gammaproteobacteria</taxon>
        <taxon>Pseudomonadales</taxon>
        <taxon>Pseudomonadaceae</taxon>
        <taxon>Pseudomonas</taxon>
    </lineage>
</organism>
<feature type="chain" id="PRO_1000051293" description="Small ribosomal subunit protein uS9">
    <location>
        <begin position="1"/>
        <end position="130"/>
    </location>
</feature>
<name>RS9_PSEE4</name>
<keyword id="KW-0687">Ribonucleoprotein</keyword>
<keyword id="KW-0689">Ribosomal protein</keyword>
<reference key="1">
    <citation type="journal article" date="2006" name="Nat. Biotechnol.">
        <title>Complete genome sequence of the entomopathogenic and metabolically versatile soil bacterium Pseudomonas entomophila.</title>
        <authorList>
            <person name="Vodovar N."/>
            <person name="Vallenet D."/>
            <person name="Cruveiller S."/>
            <person name="Rouy Z."/>
            <person name="Barbe V."/>
            <person name="Acosta C."/>
            <person name="Cattolico L."/>
            <person name="Jubin C."/>
            <person name="Lajus A."/>
            <person name="Segurens B."/>
            <person name="Vacherie B."/>
            <person name="Wincker P."/>
            <person name="Weissenbach J."/>
            <person name="Lemaitre B."/>
            <person name="Medigue C."/>
            <person name="Boccard F."/>
        </authorList>
    </citation>
    <scope>NUCLEOTIDE SEQUENCE [LARGE SCALE GENOMIC DNA]</scope>
    <source>
        <strain>L48</strain>
    </source>
</reference>
<proteinExistence type="inferred from homology"/>
<accession>Q1I597</accession>
<protein>
    <recommendedName>
        <fullName evidence="1">Small ribosomal subunit protein uS9</fullName>
    </recommendedName>
    <alternativeName>
        <fullName evidence="2">30S ribosomal protein S9</fullName>
    </alternativeName>
</protein>
<gene>
    <name evidence="1" type="primary">rpsI</name>
    <name type="ordered locus">PSEEN4506</name>
</gene>
<sequence length="130" mass="14606">MSATQNYGTGRRKTATARVFLRPGTGNISINNRSLDVFFGRETARMVVRQPLELTETVEKFDIYVTVSGGGVSGQAGAIRHGITRALMEYDETLRGALRRAGYVTRDAREVERKKVGLRKARKRPQYSKR</sequence>
<dbReference type="EMBL" id="CT573326">
    <property type="protein sequence ID" value="CAK17188.1"/>
    <property type="molecule type" value="Genomic_DNA"/>
</dbReference>
<dbReference type="RefSeq" id="WP_003260797.1">
    <property type="nucleotide sequence ID" value="NC_008027.1"/>
</dbReference>
<dbReference type="SMR" id="Q1I597"/>
<dbReference type="STRING" id="384676.PSEEN4506"/>
<dbReference type="GeneID" id="97169895"/>
<dbReference type="KEGG" id="pen:PSEEN4506"/>
<dbReference type="eggNOG" id="COG0103">
    <property type="taxonomic scope" value="Bacteria"/>
</dbReference>
<dbReference type="HOGENOM" id="CLU_046483_2_1_6"/>
<dbReference type="OrthoDB" id="9803965at2"/>
<dbReference type="Proteomes" id="UP000000658">
    <property type="component" value="Chromosome"/>
</dbReference>
<dbReference type="GO" id="GO:0022627">
    <property type="term" value="C:cytosolic small ribosomal subunit"/>
    <property type="evidence" value="ECO:0007669"/>
    <property type="project" value="TreeGrafter"/>
</dbReference>
<dbReference type="GO" id="GO:0003723">
    <property type="term" value="F:RNA binding"/>
    <property type="evidence" value="ECO:0007669"/>
    <property type="project" value="TreeGrafter"/>
</dbReference>
<dbReference type="GO" id="GO:0003735">
    <property type="term" value="F:structural constituent of ribosome"/>
    <property type="evidence" value="ECO:0007669"/>
    <property type="project" value="InterPro"/>
</dbReference>
<dbReference type="GO" id="GO:0006412">
    <property type="term" value="P:translation"/>
    <property type="evidence" value="ECO:0007669"/>
    <property type="project" value="UniProtKB-UniRule"/>
</dbReference>
<dbReference type="FunFam" id="3.30.230.10:FF:000001">
    <property type="entry name" value="30S ribosomal protein S9"/>
    <property type="match status" value="1"/>
</dbReference>
<dbReference type="Gene3D" id="3.30.230.10">
    <property type="match status" value="1"/>
</dbReference>
<dbReference type="HAMAP" id="MF_00532_B">
    <property type="entry name" value="Ribosomal_uS9_B"/>
    <property type="match status" value="1"/>
</dbReference>
<dbReference type="InterPro" id="IPR020568">
    <property type="entry name" value="Ribosomal_Su5_D2-typ_SF"/>
</dbReference>
<dbReference type="InterPro" id="IPR000754">
    <property type="entry name" value="Ribosomal_uS9"/>
</dbReference>
<dbReference type="InterPro" id="IPR023035">
    <property type="entry name" value="Ribosomal_uS9_bac/plastid"/>
</dbReference>
<dbReference type="InterPro" id="IPR020574">
    <property type="entry name" value="Ribosomal_uS9_CS"/>
</dbReference>
<dbReference type="InterPro" id="IPR014721">
    <property type="entry name" value="Ribsml_uS5_D2-typ_fold_subgr"/>
</dbReference>
<dbReference type="NCBIfam" id="NF001099">
    <property type="entry name" value="PRK00132.1"/>
    <property type="match status" value="1"/>
</dbReference>
<dbReference type="PANTHER" id="PTHR21569">
    <property type="entry name" value="RIBOSOMAL PROTEIN S9"/>
    <property type="match status" value="1"/>
</dbReference>
<dbReference type="PANTHER" id="PTHR21569:SF1">
    <property type="entry name" value="SMALL RIBOSOMAL SUBUNIT PROTEIN US9M"/>
    <property type="match status" value="1"/>
</dbReference>
<dbReference type="Pfam" id="PF00380">
    <property type="entry name" value="Ribosomal_S9"/>
    <property type="match status" value="1"/>
</dbReference>
<dbReference type="SUPFAM" id="SSF54211">
    <property type="entry name" value="Ribosomal protein S5 domain 2-like"/>
    <property type="match status" value="1"/>
</dbReference>
<dbReference type="PROSITE" id="PS00360">
    <property type="entry name" value="RIBOSOMAL_S9"/>
    <property type="match status" value="1"/>
</dbReference>
<comment type="similarity">
    <text evidence="1">Belongs to the universal ribosomal protein uS9 family.</text>
</comment>